<accession>B1K5N3</accession>
<protein>
    <recommendedName>
        <fullName evidence="1">GTP cyclohydrolase FolE2 2</fullName>
        <ecNumber evidence="1">3.5.4.16</ecNumber>
    </recommendedName>
</protein>
<name>GCH42_BURO0</name>
<comment type="function">
    <text evidence="1">Converts GTP to 7,8-dihydroneopterin triphosphate.</text>
</comment>
<comment type="catalytic activity">
    <reaction evidence="1">
        <text>GTP + H2O = 7,8-dihydroneopterin 3'-triphosphate + formate + H(+)</text>
        <dbReference type="Rhea" id="RHEA:17473"/>
        <dbReference type="ChEBI" id="CHEBI:15377"/>
        <dbReference type="ChEBI" id="CHEBI:15378"/>
        <dbReference type="ChEBI" id="CHEBI:15740"/>
        <dbReference type="ChEBI" id="CHEBI:37565"/>
        <dbReference type="ChEBI" id="CHEBI:58462"/>
        <dbReference type="EC" id="3.5.4.16"/>
    </reaction>
</comment>
<comment type="pathway">
    <text evidence="1">Cofactor biosynthesis; 7,8-dihydroneopterin triphosphate biosynthesis; 7,8-dihydroneopterin triphosphate from GTP: step 1/1.</text>
</comment>
<comment type="similarity">
    <text evidence="1">Belongs to the GTP cyclohydrolase IV family.</text>
</comment>
<comment type="sequence caution" evidence="2">
    <conflict type="erroneous initiation">
        <sequence resource="EMBL-CDS" id="ACA94067"/>
    </conflict>
</comment>
<reference key="1">
    <citation type="submission" date="2008-02" db="EMBL/GenBank/DDBJ databases">
        <title>Complete sequence of chromosome 2 of Burkholderia cenocepacia MC0-3.</title>
        <authorList>
            <person name="Copeland A."/>
            <person name="Lucas S."/>
            <person name="Lapidus A."/>
            <person name="Barry K."/>
            <person name="Bruce D."/>
            <person name="Goodwin L."/>
            <person name="Glavina del Rio T."/>
            <person name="Dalin E."/>
            <person name="Tice H."/>
            <person name="Pitluck S."/>
            <person name="Chain P."/>
            <person name="Malfatti S."/>
            <person name="Shin M."/>
            <person name="Vergez L."/>
            <person name="Schmutz J."/>
            <person name="Larimer F."/>
            <person name="Land M."/>
            <person name="Hauser L."/>
            <person name="Kyrpides N."/>
            <person name="Mikhailova N."/>
            <person name="Tiedje J."/>
            <person name="Richardson P."/>
        </authorList>
    </citation>
    <scope>NUCLEOTIDE SEQUENCE [LARGE SCALE GENOMIC DNA]</scope>
    <source>
        <strain>MC0-3</strain>
    </source>
</reference>
<keyword id="KW-0378">Hydrolase</keyword>
<dbReference type="EC" id="3.5.4.16" evidence="1"/>
<dbReference type="EMBL" id="CP000959">
    <property type="protein sequence ID" value="ACA94067.1"/>
    <property type="status" value="ALT_INIT"/>
    <property type="molecule type" value="Genomic_DNA"/>
</dbReference>
<dbReference type="SMR" id="B1K5N3"/>
<dbReference type="KEGG" id="bcm:Bcenmc03_4937"/>
<dbReference type="HOGENOM" id="CLU_062816_0_0_4"/>
<dbReference type="UniPathway" id="UPA00848">
    <property type="reaction ID" value="UER00151"/>
</dbReference>
<dbReference type="Proteomes" id="UP000002169">
    <property type="component" value="Chromosome 2"/>
</dbReference>
<dbReference type="GO" id="GO:0003934">
    <property type="term" value="F:GTP cyclohydrolase I activity"/>
    <property type="evidence" value="ECO:0007669"/>
    <property type="project" value="UniProtKB-UniRule"/>
</dbReference>
<dbReference type="GO" id="GO:0046654">
    <property type="term" value="P:tetrahydrofolate biosynthetic process"/>
    <property type="evidence" value="ECO:0007669"/>
    <property type="project" value="UniProtKB-UniRule"/>
</dbReference>
<dbReference type="Gene3D" id="3.10.270.10">
    <property type="entry name" value="Urate Oxidase"/>
    <property type="match status" value="1"/>
</dbReference>
<dbReference type="HAMAP" id="MF_01527_B">
    <property type="entry name" value="GTP_cyclohydrol_B"/>
    <property type="match status" value="1"/>
</dbReference>
<dbReference type="InterPro" id="IPR022838">
    <property type="entry name" value="GTP_cyclohydrolase_FolE2"/>
</dbReference>
<dbReference type="InterPro" id="IPR003801">
    <property type="entry name" value="GTP_cyclohydrolase_FolE2/MptA"/>
</dbReference>
<dbReference type="NCBIfam" id="NF010200">
    <property type="entry name" value="PRK13674.1-1"/>
    <property type="match status" value="1"/>
</dbReference>
<dbReference type="PANTHER" id="PTHR36445">
    <property type="entry name" value="GTP CYCLOHYDROLASE MPTA"/>
    <property type="match status" value="1"/>
</dbReference>
<dbReference type="PANTHER" id="PTHR36445:SF1">
    <property type="entry name" value="GTP CYCLOHYDROLASE MPTA"/>
    <property type="match status" value="1"/>
</dbReference>
<dbReference type="Pfam" id="PF02649">
    <property type="entry name" value="GCHY-1"/>
    <property type="match status" value="1"/>
</dbReference>
<gene>
    <name evidence="1" type="primary">folE2-2</name>
    <name type="ordered locus">Bcenmc03_4937</name>
</gene>
<proteinExistence type="inferred from homology"/>
<evidence type="ECO:0000255" key="1">
    <source>
        <dbReference type="HAMAP-Rule" id="MF_01527"/>
    </source>
</evidence>
<evidence type="ECO:0000305" key="2"/>
<organism>
    <name type="scientific">Burkholderia orbicola (strain MC0-3)</name>
    <dbReference type="NCBI Taxonomy" id="406425"/>
    <lineage>
        <taxon>Bacteria</taxon>
        <taxon>Pseudomonadati</taxon>
        <taxon>Pseudomonadota</taxon>
        <taxon>Betaproteobacteria</taxon>
        <taxon>Burkholderiales</taxon>
        <taxon>Burkholderiaceae</taxon>
        <taxon>Burkholderia</taxon>
        <taxon>Burkholderia cepacia complex</taxon>
        <taxon>Burkholderia orbicola</taxon>
    </lineage>
</organism>
<sequence length="316" mass="34116">MEKALHRISSMNAALPDISLTDAAPGRRPLEWVGMQGIDLPVVVAEPGCRRDVHARADVQVDLPAPQVKGIHMSRLYGLLDGLADGEALSPAGLQRMLRAMVDSHRDCATRSARVRLRFDLLARRTALVTEGLAGWKAYPVRLDATLSGDAFALRAQVTVVYSSTCPCSAALSRHWIEQAFLTAFGHEARVEPTAVAAWLKRHATAATPHSQRSEAVVSVALPADGTTLGLLDLIDRVEQALGTPVQTAVKRADEQAFAVLNGGNLMFVEDAARRVQAALEDRHASPRVRVRHLESLHPHDAVAWAAPLREGADAC</sequence>
<feature type="chain" id="PRO_0000372023" description="GTP cyclohydrolase FolE2 2">
    <location>
        <begin position="1"/>
        <end position="316"/>
    </location>
</feature>
<feature type="site" description="May be catalytically important" evidence="1">
    <location>
        <position position="166"/>
    </location>
</feature>